<keyword id="KW-0428">Leader peptide</keyword>
<accession>C6UP45</accession>
<proteinExistence type="inferred from homology"/>
<feature type="chain" id="PRO_0000403455" description="mgtA leader peptide">
    <location>
        <begin position="1"/>
        <end position="17"/>
    </location>
</feature>
<sequence length="17" mass="2123">MEPDPTPLPRRRLKLFR</sequence>
<reference key="1">
    <citation type="journal article" date="2009" name="Infect. Immun.">
        <title>Analysis of the genome of the Escherichia coli O157:H7 2006 spinach-associated outbreak isolate indicates candidate genes that may enhance virulence.</title>
        <authorList>
            <person name="Kulasekara B.R."/>
            <person name="Jacobs M."/>
            <person name="Zhou Y."/>
            <person name="Wu Z."/>
            <person name="Sims E."/>
            <person name="Saenphimmachak C."/>
            <person name="Rohmer L."/>
            <person name="Ritchie J.M."/>
            <person name="Radey M."/>
            <person name="McKevitt M."/>
            <person name="Freeman T.L."/>
            <person name="Hayden H."/>
            <person name="Haugen E."/>
            <person name="Gillett W."/>
            <person name="Fong C."/>
            <person name="Chang J."/>
            <person name="Beskhlebnaya V."/>
            <person name="Waldor M.K."/>
            <person name="Samadpour M."/>
            <person name="Whittam T.S."/>
            <person name="Kaul R."/>
            <person name="Brittnacher M."/>
            <person name="Miller S.I."/>
        </authorList>
    </citation>
    <scope>NUCLEOTIDE SEQUENCE [LARGE SCALE GENOMIC DNA]</scope>
    <source>
        <strain>TW14359 / EHEC</strain>
    </source>
</reference>
<evidence type="ECO:0000250" key="1"/>
<evidence type="ECO:0000305" key="2"/>
<name>LPMG_ECO5T</name>
<comment type="function">
    <text evidence="1">Makes mgtA transcription sensitive to intracellular proline levels. Under low levels of proline this protein cannot be fully translated, and a stem loop forms which permits transcription of the downstream mgtA gene (By similarity).</text>
</comment>
<comment type="similarity">
    <text evidence="2">Belongs to the MgtL family.</text>
</comment>
<comment type="sequence caution" evidence="2">
    <conflict type="erroneous initiation">
        <sequence resource="EMBL-CDS" id="ACT75023"/>
    </conflict>
    <text>Extended N-terminus.</text>
</comment>
<gene>
    <name type="primary">mgtL</name>
    <name type="ordered locus">ECSP_5343</name>
</gene>
<organism>
    <name type="scientific">Escherichia coli O157:H7 (strain TW14359 / EHEC)</name>
    <dbReference type="NCBI Taxonomy" id="544404"/>
    <lineage>
        <taxon>Bacteria</taxon>
        <taxon>Pseudomonadati</taxon>
        <taxon>Pseudomonadota</taxon>
        <taxon>Gammaproteobacteria</taxon>
        <taxon>Enterobacterales</taxon>
        <taxon>Enterobacteriaceae</taxon>
        <taxon>Escherichia</taxon>
    </lineage>
</organism>
<dbReference type="EMBL" id="CP001368">
    <property type="protein sequence ID" value="ACT75023.1"/>
    <property type="status" value="ALT_INIT"/>
    <property type="molecule type" value="Genomic_DNA"/>
</dbReference>
<dbReference type="RefSeq" id="WP_001387276.1">
    <property type="nucleotide sequence ID" value="NC_013008.1"/>
</dbReference>
<dbReference type="GeneID" id="93777583"/>
<dbReference type="KEGG" id="etw:ECSP_5343"/>
<dbReference type="HOGENOM" id="CLU_2896927_0_0_6"/>
<dbReference type="InterPro" id="IPR031434">
    <property type="entry name" value="MGTL"/>
</dbReference>
<dbReference type="Pfam" id="PF17059">
    <property type="entry name" value="MGTL"/>
    <property type="match status" value="1"/>
</dbReference>
<protein>
    <recommendedName>
        <fullName>mgtA leader peptide</fullName>
    </recommendedName>
    <alternativeName>
        <fullName>Regulatory leader peptide for mgtA</fullName>
    </alternativeName>
</protein>